<proteinExistence type="inferred from homology"/>
<reference key="1">
    <citation type="journal article" date="2010" name="Stand. Genomic Sci.">
        <title>Complete genome sequence of Rhizobium leguminosarum bv trifolii strain WSM2304, an effective microsymbiont of the South American clover Trifolium polymorphum.</title>
        <authorList>
            <person name="Reeve W."/>
            <person name="O'Hara G."/>
            <person name="Chain P."/>
            <person name="Ardley J."/>
            <person name="Brau L."/>
            <person name="Nandesena K."/>
            <person name="Tiwari R."/>
            <person name="Malfatti S."/>
            <person name="Kiss H."/>
            <person name="Lapidus A."/>
            <person name="Copeland A."/>
            <person name="Nolan M."/>
            <person name="Land M."/>
            <person name="Ivanova N."/>
            <person name="Mavromatis K."/>
            <person name="Markowitz V."/>
            <person name="Kyrpides N."/>
            <person name="Melino V."/>
            <person name="Denton M."/>
            <person name="Yates R."/>
            <person name="Howieson J."/>
        </authorList>
    </citation>
    <scope>NUCLEOTIDE SEQUENCE [LARGE SCALE GENOMIC DNA]</scope>
    <source>
        <strain>WSM2304</strain>
    </source>
</reference>
<feature type="chain" id="PRO_1000130896" description="Malate synthase G">
    <location>
        <begin position="1"/>
        <end position="723"/>
    </location>
</feature>
<feature type="active site" description="Proton acceptor" evidence="1">
    <location>
        <position position="338"/>
    </location>
</feature>
<feature type="active site" description="Proton donor" evidence="1">
    <location>
        <position position="629"/>
    </location>
</feature>
<feature type="binding site" evidence="1">
    <location>
        <position position="116"/>
    </location>
    <ligand>
        <name>acetyl-CoA</name>
        <dbReference type="ChEBI" id="CHEBI:57288"/>
    </ligand>
</feature>
<feature type="binding site" evidence="1">
    <location>
        <begin position="123"/>
        <end position="124"/>
    </location>
    <ligand>
        <name>acetyl-CoA</name>
        <dbReference type="ChEBI" id="CHEBI:57288"/>
    </ligand>
</feature>
<feature type="binding site" evidence="1">
    <location>
        <position position="274"/>
    </location>
    <ligand>
        <name>acetyl-CoA</name>
        <dbReference type="ChEBI" id="CHEBI:57288"/>
    </ligand>
</feature>
<feature type="binding site" evidence="1">
    <location>
        <position position="311"/>
    </location>
    <ligand>
        <name>acetyl-CoA</name>
        <dbReference type="ChEBI" id="CHEBI:57288"/>
    </ligand>
</feature>
<feature type="binding site" evidence="1">
    <location>
        <position position="338"/>
    </location>
    <ligand>
        <name>glyoxylate</name>
        <dbReference type="ChEBI" id="CHEBI:36655"/>
    </ligand>
</feature>
<feature type="binding site" evidence="1">
    <location>
        <position position="430"/>
    </location>
    <ligand>
        <name>glyoxylate</name>
        <dbReference type="ChEBI" id="CHEBI:36655"/>
    </ligand>
</feature>
<feature type="binding site" evidence="1">
    <location>
        <position position="430"/>
    </location>
    <ligand>
        <name>Mg(2+)</name>
        <dbReference type="ChEBI" id="CHEBI:18420"/>
    </ligand>
</feature>
<feature type="binding site" evidence="1">
    <location>
        <begin position="455"/>
        <end position="458"/>
    </location>
    <ligand>
        <name>glyoxylate</name>
        <dbReference type="ChEBI" id="CHEBI:36655"/>
    </ligand>
</feature>
<feature type="binding site" evidence="1">
    <location>
        <position position="458"/>
    </location>
    <ligand>
        <name>Mg(2+)</name>
        <dbReference type="ChEBI" id="CHEBI:18420"/>
    </ligand>
</feature>
<feature type="binding site" evidence="1">
    <location>
        <position position="539"/>
    </location>
    <ligand>
        <name>acetyl-CoA</name>
        <dbReference type="ChEBI" id="CHEBI:57288"/>
    </ligand>
</feature>
<feature type="modified residue" description="Cysteine sulfenic acid (-SOH)" evidence="1">
    <location>
        <position position="615"/>
    </location>
</feature>
<evidence type="ECO:0000255" key="1">
    <source>
        <dbReference type="HAMAP-Rule" id="MF_00641"/>
    </source>
</evidence>
<accession>B5ZVA2</accession>
<comment type="function">
    <text evidence="1">Involved in the glycolate utilization. Catalyzes the condensation and subsequent hydrolysis of acetyl-coenzyme A (acetyl-CoA) and glyoxylate to form malate and CoA.</text>
</comment>
<comment type="catalytic activity">
    <reaction evidence="1">
        <text>glyoxylate + acetyl-CoA + H2O = (S)-malate + CoA + H(+)</text>
        <dbReference type="Rhea" id="RHEA:18181"/>
        <dbReference type="ChEBI" id="CHEBI:15377"/>
        <dbReference type="ChEBI" id="CHEBI:15378"/>
        <dbReference type="ChEBI" id="CHEBI:15589"/>
        <dbReference type="ChEBI" id="CHEBI:36655"/>
        <dbReference type="ChEBI" id="CHEBI:57287"/>
        <dbReference type="ChEBI" id="CHEBI:57288"/>
        <dbReference type="EC" id="2.3.3.9"/>
    </reaction>
</comment>
<comment type="cofactor">
    <cofactor evidence="1">
        <name>Mg(2+)</name>
        <dbReference type="ChEBI" id="CHEBI:18420"/>
    </cofactor>
</comment>
<comment type="pathway">
    <text evidence="1">Carbohydrate metabolism; glyoxylate cycle; (S)-malate from isocitrate: step 2/2.</text>
</comment>
<comment type="subunit">
    <text evidence="1">Monomer.</text>
</comment>
<comment type="subcellular location">
    <subcellularLocation>
        <location evidence="1">Cytoplasm</location>
    </subcellularLocation>
</comment>
<comment type="similarity">
    <text evidence="1">Belongs to the malate synthase family. GlcB subfamily.</text>
</comment>
<gene>
    <name evidence="1" type="primary">glcB</name>
    <name type="ordered locus">Rleg2_3986</name>
</gene>
<protein>
    <recommendedName>
        <fullName evidence="1">Malate synthase G</fullName>
        <ecNumber evidence="1">2.3.3.9</ecNumber>
    </recommendedName>
</protein>
<organism>
    <name type="scientific">Rhizobium leguminosarum bv. trifolii (strain WSM2304)</name>
    <dbReference type="NCBI Taxonomy" id="395492"/>
    <lineage>
        <taxon>Bacteria</taxon>
        <taxon>Pseudomonadati</taxon>
        <taxon>Pseudomonadota</taxon>
        <taxon>Alphaproteobacteria</taxon>
        <taxon>Hyphomicrobiales</taxon>
        <taxon>Rhizobiaceae</taxon>
        <taxon>Rhizobium/Agrobacterium group</taxon>
        <taxon>Rhizobium</taxon>
    </lineage>
</organism>
<sequence length="723" mass="79709">MSRIDKNGLAIEAVLHDFLVQEVLPGLAIDADKFFADFSAIVHDLAPKNRALLARRDELEVKIDDWYRQHGAPADMDDYQSFLRGIGYLLPEGSDFQVSTQNVDPEIASIAGPQLVVPVMNARYALNAANARWGSLYDALYGTDAIPETDGAEKGRGYNPKRGEKVIAWVRDFLDMSVPLQDSSWKNVGNFTVKDGILVIRSVDGEQAMLVDGGHFAGYRGDAAAPTHILLKNNGIHIKIVIDATTAIGKTDPAHISDVWLESAITTIMDCEDSIAAVDAEDKTVVYRNWLGLMKGDLQEEVVKGGTSFVRKLNPDLDYTGPDGTVFELHRRSLMLVRNVGHLMTNPAILDRDGAEVPEGILDAVITGLIALYDIGPAGRRKNSRTGSMYVVKPKMHGPEEVAFAVEIFSRVEDALGMARNTIKMGIMDEERRTTVNLKECIRAARERVVFINTGFLDRTGDEIHTSMEAGPMIRKGDMRQAAWISAYENWNVDIGLECGLAGHAQIGKGMWAMPDLMAAMLEQKIAHPKAGANTAWVPSPTAATLHATHYHRVNVARVQQGLKDRARAKLSDILSVPVAVRPNWTPEEIQRELDNNAQGILGYVVRWVDQGVGCSKVPDINNVGLMEDRATLRISAQHMANWLHHQVVTEAQIVETMKRMAAVVDRQNEADPLYQPMAGNFDGSIAFQAALDLVLKGREQPNGYTEPVLHRRRLELKAKQAG</sequence>
<name>MASZ_RHILW</name>
<keyword id="KW-0963">Cytoplasm</keyword>
<keyword id="KW-0329">Glyoxylate bypass</keyword>
<keyword id="KW-0460">Magnesium</keyword>
<keyword id="KW-0479">Metal-binding</keyword>
<keyword id="KW-0558">Oxidation</keyword>
<keyword id="KW-1185">Reference proteome</keyword>
<keyword id="KW-0808">Transferase</keyword>
<keyword id="KW-0816">Tricarboxylic acid cycle</keyword>
<dbReference type="EC" id="2.3.3.9" evidence="1"/>
<dbReference type="EMBL" id="CP001191">
    <property type="protein sequence ID" value="ACI57248.1"/>
    <property type="molecule type" value="Genomic_DNA"/>
</dbReference>
<dbReference type="RefSeq" id="WP_012559427.1">
    <property type="nucleotide sequence ID" value="NC_011369.1"/>
</dbReference>
<dbReference type="SMR" id="B5ZVA2"/>
<dbReference type="STRING" id="395492.Rleg2_3986"/>
<dbReference type="KEGG" id="rlt:Rleg2_3986"/>
<dbReference type="eggNOG" id="COG2225">
    <property type="taxonomic scope" value="Bacteria"/>
</dbReference>
<dbReference type="HOGENOM" id="CLU_028446_1_0_5"/>
<dbReference type="UniPathway" id="UPA00703">
    <property type="reaction ID" value="UER00720"/>
</dbReference>
<dbReference type="Proteomes" id="UP000008330">
    <property type="component" value="Chromosome"/>
</dbReference>
<dbReference type="GO" id="GO:0005829">
    <property type="term" value="C:cytosol"/>
    <property type="evidence" value="ECO:0007669"/>
    <property type="project" value="TreeGrafter"/>
</dbReference>
<dbReference type="GO" id="GO:0000287">
    <property type="term" value="F:magnesium ion binding"/>
    <property type="evidence" value="ECO:0007669"/>
    <property type="project" value="TreeGrafter"/>
</dbReference>
<dbReference type="GO" id="GO:0004474">
    <property type="term" value="F:malate synthase activity"/>
    <property type="evidence" value="ECO:0007669"/>
    <property type="project" value="UniProtKB-UniRule"/>
</dbReference>
<dbReference type="GO" id="GO:0009436">
    <property type="term" value="P:glyoxylate catabolic process"/>
    <property type="evidence" value="ECO:0007669"/>
    <property type="project" value="TreeGrafter"/>
</dbReference>
<dbReference type="GO" id="GO:0006097">
    <property type="term" value="P:glyoxylate cycle"/>
    <property type="evidence" value="ECO:0007669"/>
    <property type="project" value="UniProtKB-UniRule"/>
</dbReference>
<dbReference type="GO" id="GO:0006099">
    <property type="term" value="P:tricarboxylic acid cycle"/>
    <property type="evidence" value="ECO:0007669"/>
    <property type="project" value="UniProtKB-KW"/>
</dbReference>
<dbReference type="CDD" id="cd00728">
    <property type="entry name" value="malate_synt_G"/>
    <property type="match status" value="1"/>
</dbReference>
<dbReference type="FunFam" id="3.20.20.360:FF:000002">
    <property type="entry name" value="Malate synthase G"/>
    <property type="match status" value="1"/>
</dbReference>
<dbReference type="Gene3D" id="3.20.20.360">
    <property type="entry name" value="Malate synthase, domain 3"/>
    <property type="match status" value="2"/>
</dbReference>
<dbReference type="Gene3D" id="1.20.1220.12">
    <property type="entry name" value="Malate synthase, domain III"/>
    <property type="match status" value="1"/>
</dbReference>
<dbReference type="HAMAP" id="MF_00641">
    <property type="entry name" value="Malate_synth_G"/>
    <property type="match status" value="1"/>
</dbReference>
<dbReference type="InterPro" id="IPR044856">
    <property type="entry name" value="Malate_synth_C_sf"/>
</dbReference>
<dbReference type="InterPro" id="IPR011076">
    <property type="entry name" value="Malate_synth_sf"/>
</dbReference>
<dbReference type="InterPro" id="IPR001465">
    <property type="entry name" value="Malate_synthase_TIM"/>
</dbReference>
<dbReference type="InterPro" id="IPR006253">
    <property type="entry name" value="Malate_synthG"/>
</dbReference>
<dbReference type="InterPro" id="IPR048355">
    <property type="entry name" value="MS_C"/>
</dbReference>
<dbReference type="InterPro" id="IPR048356">
    <property type="entry name" value="MS_N"/>
</dbReference>
<dbReference type="InterPro" id="IPR046363">
    <property type="entry name" value="MS_N_TIM-barrel_dom"/>
</dbReference>
<dbReference type="InterPro" id="IPR048357">
    <property type="entry name" value="MSG_insertion"/>
</dbReference>
<dbReference type="NCBIfam" id="TIGR01345">
    <property type="entry name" value="malate_syn_G"/>
    <property type="match status" value="1"/>
</dbReference>
<dbReference type="NCBIfam" id="NF002825">
    <property type="entry name" value="PRK02999.1"/>
    <property type="match status" value="1"/>
</dbReference>
<dbReference type="PANTHER" id="PTHR42739">
    <property type="entry name" value="MALATE SYNTHASE G"/>
    <property type="match status" value="1"/>
</dbReference>
<dbReference type="PANTHER" id="PTHR42739:SF1">
    <property type="entry name" value="MALATE SYNTHASE G"/>
    <property type="match status" value="1"/>
</dbReference>
<dbReference type="Pfam" id="PF20659">
    <property type="entry name" value="MS_C"/>
    <property type="match status" value="1"/>
</dbReference>
<dbReference type="Pfam" id="PF20656">
    <property type="entry name" value="MS_N"/>
    <property type="match status" value="1"/>
</dbReference>
<dbReference type="Pfam" id="PF01274">
    <property type="entry name" value="MS_TIM-barrel"/>
    <property type="match status" value="1"/>
</dbReference>
<dbReference type="Pfam" id="PF20658">
    <property type="entry name" value="MSG_insertion"/>
    <property type="match status" value="1"/>
</dbReference>
<dbReference type="SUPFAM" id="SSF51645">
    <property type="entry name" value="Malate synthase G"/>
    <property type="match status" value="1"/>
</dbReference>